<organism>
    <name type="scientific">Legionella pneumophila (strain Corby)</name>
    <dbReference type="NCBI Taxonomy" id="400673"/>
    <lineage>
        <taxon>Bacteria</taxon>
        <taxon>Pseudomonadati</taxon>
        <taxon>Pseudomonadota</taxon>
        <taxon>Gammaproteobacteria</taxon>
        <taxon>Legionellales</taxon>
        <taxon>Legionellaceae</taxon>
        <taxon>Legionella</taxon>
    </lineage>
</organism>
<dbReference type="EC" id="6.1.1.23" evidence="1"/>
<dbReference type="EMBL" id="CP000675">
    <property type="protein sequence ID" value="ABQ54868.1"/>
    <property type="molecule type" value="Genomic_DNA"/>
</dbReference>
<dbReference type="RefSeq" id="WP_011946479.1">
    <property type="nucleotide sequence ID" value="NC_009494.2"/>
</dbReference>
<dbReference type="SMR" id="A5IBW8"/>
<dbReference type="KEGG" id="lpc:LPC_0892"/>
<dbReference type="HOGENOM" id="CLU_014330_3_2_6"/>
<dbReference type="GO" id="GO:0005737">
    <property type="term" value="C:cytoplasm"/>
    <property type="evidence" value="ECO:0007669"/>
    <property type="project" value="UniProtKB-SubCell"/>
</dbReference>
<dbReference type="GO" id="GO:0004815">
    <property type="term" value="F:aspartate-tRNA ligase activity"/>
    <property type="evidence" value="ECO:0007669"/>
    <property type="project" value="UniProtKB-UniRule"/>
</dbReference>
<dbReference type="GO" id="GO:0050560">
    <property type="term" value="F:aspartate-tRNA(Asn) ligase activity"/>
    <property type="evidence" value="ECO:0007669"/>
    <property type="project" value="UniProtKB-EC"/>
</dbReference>
<dbReference type="GO" id="GO:0005524">
    <property type="term" value="F:ATP binding"/>
    <property type="evidence" value="ECO:0007669"/>
    <property type="project" value="UniProtKB-UniRule"/>
</dbReference>
<dbReference type="GO" id="GO:0003676">
    <property type="term" value="F:nucleic acid binding"/>
    <property type="evidence" value="ECO:0007669"/>
    <property type="project" value="InterPro"/>
</dbReference>
<dbReference type="GO" id="GO:0006422">
    <property type="term" value="P:aspartyl-tRNA aminoacylation"/>
    <property type="evidence" value="ECO:0007669"/>
    <property type="project" value="UniProtKB-UniRule"/>
</dbReference>
<dbReference type="CDD" id="cd00777">
    <property type="entry name" value="AspRS_core"/>
    <property type="match status" value="1"/>
</dbReference>
<dbReference type="CDD" id="cd04317">
    <property type="entry name" value="EcAspRS_like_N"/>
    <property type="match status" value="1"/>
</dbReference>
<dbReference type="Gene3D" id="3.30.930.10">
    <property type="entry name" value="Bira Bifunctional Protein, Domain 2"/>
    <property type="match status" value="1"/>
</dbReference>
<dbReference type="Gene3D" id="3.30.1360.30">
    <property type="entry name" value="GAD-like domain"/>
    <property type="match status" value="1"/>
</dbReference>
<dbReference type="Gene3D" id="2.40.50.140">
    <property type="entry name" value="Nucleic acid-binding proteins"/>
    <property type="match status" value="1"/>
</dbReference>
<dbReference type="HAMAP" id="MF_00044">
    <property type="entry name" value="Asp_tRNA_synth_type1"/>
    <property type="match status" value="1"/>
</dbReference>
<dbReference type="InterPro" id="IPR004364">
    <property type="entry name" value="Aa-tRNA-synt_II"/>
</dbReference>
<dbReference type="InterPro" id="IPR006195">
    <property type="entry name" value="aa-tRNA-synth_II"/>
</dbReference>
<dbReference type="InterPro" id="IPR045864">
    <property type="entry name" value="aa-tRNA-synth_II/BPL/LPL"/>
</dbReference>
<dbReference type="InterPro" id="IPR004524">
    <property type="entry name" value="Asp-tRNA-ligase_1"/>
</dbReference>
<dbReference type="InterPro" id="IPR047089">
    <property type="entry name" value="Asp-tRNA-ligase_1_N"/>
</dbReference>
<dbReference type="InterPro" id="IPR002312">
    <property type="entry name" value="Asp/Asn-tRNA-synth_IIb"/>
</dbReference>
<dbReference type="InterPro" id="IPR047090">
    <property type="entry name" value="AspRS_core"/>
</dbReference>
<dbReference type="InterPro" id="IPR004115">
    <property type="entry name" value="GAD-like_sf"/>
</dbReference>
<dbReference type="InterPro" id="IPR029351">
    <property type="entry name" value="GAD_dom"/>
</dbReference>
<dbReference type="InterPro" id="IPR012340">
    <property type="entry name" value="NA-bd_OB-fold"/>
</dbReference>
<dbReference type="InterPro" id="IPR004365">
    <property type="entry name" value="NA-bd_OB_tRNA"/>
</dbReference>
<dbReference type="NCBIfam" id="TIGR00459">
    <property type="entry name" value="aspS_bact"/>
    <property type="match status" value="1"/>
</dbReference>
<dbReference type="NCBIfam" id="NF001750">
    <property type="entry name" value="PRK00476.1"/>
    <property type="match status" value="1"/>
</dbReference>
<dbReference type="PANTHER" id="PTHR22594:SF5">
    <property type="entry name" value="ASPARTATE--TRNA LIGASE, MITOCHONDRIAL"/>
    <property type="match status" value="1"/>
</dbReference>
<dbReference type="PANTHER" id="PTHR22594">
    <property type="entry name" value="ASPARTYL/LYSYL-TRNA SYNTHETASE"/>
    <property type="match status" value="1"/>
</dbReference>
<dbReference type="Pfam" id="PF02938">
    <property type="entry name" value="GAD"/>
    <property type="match status" value="1"/>
</dbReference>
<dbReference type="Pfam" id="PF00152">
    <property type="entry name" value="tRNA-synt_2"/>
    <property type="match status" value="1"/>
</dbReference>
<dbReference type="Pfam" id="PF01336">
    <property type="entry name" value="tRNA_anti-codon"/>
    <property type="match status" value="1"/>
</dbReference>
<dbReference type="PRINTS" id="PR01042">
    <property type="entry name" value="TRNASYNTHASP"/>
</dbReference>
<dbReference type="SUPFAM" id="SSF55681">
    <property type="entry name" value="Class II aaRS and biotin synthetases"/>
    <property type="match status" value="1"/>
</dbReference>
<dbReference type="SUPFAM" id="SSF55261">
    <property type="entry name" value="GAD domain-like"/>
    <property type="match status" value="1"/>
</dbReference>
<dbReference type="SUPFAM" id="SSF50249">
    <property type="entry name" value="Nucleic acid-binding proteins"/>
    <property type="match status" value="1"/>
</dbReference>
<dbReference type="PROSITE" id="PS50862">
    <property type="entry name" value="AA_TRNA_LIGASE_II"/>
    <property type="match status" value="1"/>
</dbReference>
<keyword id="KW-0030">Aminoacyl-tRNA synthetase</keyword>
<keyword id="KW-0067">ATP-binding</keyword>
<keyword id="KW-0963">Cytoplasm</keyword>
<keyword id="KW-0436">Ligase</keyword>
<keyword id="KW-0547">Nucleotide-binding</keyword>
<keyword id="KW-0648">Protein biosynthesis</keyword>
<protein>
    <recommendedName>
        <fullName evidence="1">Aspartate--tRNA(Asp/Asn) ligase</fullName>
        <ecNumber evidence="1">6.1.1.23</ecNumber>
    </recommendedName>
    <alternativeName>
        <fullName evidence="1">Aspartyl-tRNA synthetase</fullName>
        <shortName evidence="1">AspRS</shortName>
    </alternativeName>
    <alternativeName>
        <fullName evidence="1">Non-discriminating aspartyl-tRNA synthetase</fullName>
        <shortName evidence="1">ND-AspRS</shortName>
    </alternativeName>
</protein>
<comment type="function">
    <text evidence="1">Aspartyl-tRNA synthetase with relaxed tRNA specificity since it is able to aspartylate not only its cognate tRNA(Asp) but also tRNA(Asn). Reaction proceeds in two steps: L-aspartate is first activated by ATP to form Asp-AMP and then transferred to the acceptor end of tRNA(Asp/Asn).</text>
</comment>
<comment type="catalytic activity">
    <reaction evidence="1">
        <text>tRNA(Asx) + L-aspartate + ATP = L-aspartyl-tRNA(Asx) + AMP + diphosphate</text>
        <dbReference type="Rhea" id="RHEA:18349"/>
        <dbReference type="Rhea" id="RHEA-COMP:9710"/>
        <dbReference type="Rhea" id="RHEA-COMP:9711"/>
        <dbReference type="ChEBI" id="CHEBI:29991"/>
        <dbReference type="ChEBI" id="CHEBI:30616"/>
        <dbReference type="ChEBI" id="CHEBI:33019"/>
        <dbReference type="ChEBI" id="CHEBI:78442"/>
        <dbReference type="ChEBI" id="CHEBI:78516"/>
        <dbReference type="ChEBI" id="CHEBI:456215"/>
        <dbReference type="EC" id="6.1.1.23"/>
    </reaction>
</comment>
<comment type="subunit">
    <text evidence="1">Homodimer.</text>
</comment>
<comment type="subcellular location">
    <subcellularLocation>
        <location evidence="1">Cytoplasm</location>
    </subcellularLocation>
</comment>
<comment type="similarity">
    <text evidence="1">Belongs to the class-II aminoacyl-tRNA synthetase family. Type 1 subfamily.</text>
</comment>
<reference key="1">
    <citation type="submission" date="2006-11" db="EMBL/GenBank/DDBJ databases">
        <title>Identification and characterization of a new conjugation/ type IVA secretion system (trb/tra) of L. pneumophila Corby localized on a mobile genomic island.</title>
        <authorList>
            <person name="Gloeckner G."/>
            <person name="Albert-Weissenberger C."/>
            <person name="Weinmann E."/>
            <person name="Jacobi S."/>
            <person name="Schunder E."/>
            <person name="Steinert M."/>
            <person name="Buchrieser C."/>
            <person name="Hacker J."/>
            <person name="Heuner K."/>
        </authorList>
    </citation>
    <scope>NUCLEOTIDE SEQUENCE [LARGE SCALE GENOMIC DNA]</scope>
    <source>
        <strain>Corby</strain>
    </source>
</reference>
<sequence length="593" mass="66844">MRTHYCSAVNELSLDKQITVCGWVHNRRDHGGVIFLDIRDRSGLLQVVYEPENKEIFAIAEKLRSEFVVRVTGIVRKRPEGMINDKMETGRVEVIGTQLEILNQSPTPPFLPDDHQIINEDLRYKYRYIDLRRAVMQKKLTLRHKLNSCIRNYLNEQNFLDIETPMLTKATPEGARDYLVPSRVHPGQFYALPQSPQLFKQLLMMSGFDKYYQIVRCFRDEDLRADRQPEFTQLDIEMAFINEEDILQLIEGLLKIVFKEILNITLPDKLPRMSYKEAMTRYGSDKPDLRNPLELIDIADLVKDCDFNVFSSAANDNSGRVVALKLPNGCDLSRKDLDNYGQFVTIYGAKGLAYIKVNDLSAGMAGLQSPILKFLSETAVQSILNRVEAQTGDVIFFGADKAHVVNESMGALRNKLGHDRNLINSGWQLLWVVDWPMFELDPQSNKLQPMHHPFTSPQELSAEALRSKPTQTLAKAYDIVINGYEIGGGSIRIHQPELQKTVFDLIGIGDQEAHEKFGFLLDALQYGAPPHGGIALGIDRLAMLLTDSTSIRDVIAFPKTQTASCPLTSAPSPAGNAQLTELGIRLAPTITTK</sequence>
<proteinExistence type="inferred from homology"/>
<evidence type="ECO:0000255" key="1">
    <source>
        <dbReference type="HAMAP-Rule" id="MF_00044"/>
    </source>
</evidence>
<feature type="chain" id="PRO_1000006694" description="Aspartate--tRNA(Asp/Asn) ligase">
    <location>
        <begin position="1"/>
        <end position="593"/>
    </location>
</feature>
<feature type="region of interest" description="Aspartate" evidence="1">
    <location>
        <begin position="197"/>
        <end position="200"/>
    </location>
</feature>
<feature type="binding site" evidence="1">
    <location>
        <position position="173"/>
    </location>
    <ligand>
        <name>L-aspartate</name>
        <dbReference type="ChEBI" id="CHEBI:29991"/>
    </ligand>
</feature>
<feature type="binding site" evidence="1">
    <location>
        <begin position="219"/>
        <end position="221"/>
    </location>
    <ligand>
        <name>ATP</name>
        <dbReference type="ChEBI" id="CHEBI:30616"/>
    </ligand>
</feature>
<feature type="binding site" evidence="1">
    <location>
        <position position="219"/>
    </location>
    <ligand>
        <name>L-aspartate</name>
        <dbReference type="ChEBI" id="CHEBI:29991"/>
    </ligand>
</feature>
<feature type="binding site" evidence="1">
    <location>
        <position position="228"/>
    </location>
    <ligand>
        <name>ATP</name>
        <dbReference type="ChEBI" id="CHEBI:30616"/>
    </ligand>
</feature>
<feature type="binding site" evidence="1">
    <location>
        <position position="451"/>
    </location>
    <ligand>
        <name>L-aspartate</name>
        <dbReference type="ChEBI" id="CHEBI:29991"/>
    </ligand>
</feature>
<feature type="binding site" evidence="1">
    <location>
        <position position="485"/>
    </location>
    <ligand>
        <name>ATP</name>
        <dbReference type="ChEBI" id="CHEBI:30616"/>
    </ligand>
</feature>
<feature type="binding site" evidence="1">
    <location>
        <position position="492"/>
    </location>
    <ligand>
        <name>L-aspartate</name>
        <dbReference type="ChEBI" id="CHEBI:29991"/>
    </ligand>
</feature>
<feature type="binding site" evidence="1">
    <location>
        <begin position="537"/>
        <end position="540"/>
    </location>
    <ligand>
        <name>ATP</name>
        <dbReference type="ChEBI" id="CHEBI:30616"/>
    </ligand>
</feature>
<feature type="site" description="Important for tRNA non-discrimination" evidence="1">
    <location>
        <position position="30"/>
    </location>
</feature>
<feature type="site" description="Important for tRNA non-discrimination" evidence="1">
    <location>
        <position position="81"/>
    </location>
</feature>
<accession>A5IBW8</accession>
<name>SYDND_LEGPC</name>
<gene>
    <name evidence="1" type="primary">aspS</name>
    <name type="ordered locus">LPC_0892</name>
</gene>